<sequence length="336" mass="35185">MTDRAMSYPRILADVGGTNVRFAMETAPMRIGEITAYKVAEHASLEAAMRLYMLTRSGAARPRHAAIGLANPVTGDQVKLTNHNWAFSVEAMRRALDLDTLVAINDFTSLALALPYLPDASLVQVRDGTAVATAPRALIGPGTGLGVSGLIPAPGGAVALAGEGGHIEIMPVTDDEWIAWRAAHDQFGRVSAERLLSGMGLSHIHAALSAEMGTPLEVPLAPAQVTDGAMRAGDPVCRRAFDAFCGMLGSVAADVALVLGARGGVYLGGGIVPRFVDALRASTFAERFVAKGRMGSFLADVPVYVITAEYPALPGLARALADRLEADARRAETSQS</sequence>
<reference key="1">
    <citation type="journal article" date="2010" name="PLoS ONE">
        <title>The complete genome sequence of Cupriavidus metallidurans strain CH34, a master survivalist in harsh and anthropogenic environments.</title>
        <authorList>
            <person name="Janssen P.J."/>
            <person name="Van Houdt R."/>
            <person name="Moors H."/>
            <person name="Monsieurs P."/>
            <person name="Morin N."/>
            <person name="Michaux A."/>
            <person name="Benotmane M.A."/>
            <person name="Leys N."/>
            <person name="Vallaeys T."/>
            <person name="Lapidus A."/>
            <person name="Monchy S."/>
            <person name="Medigue C."/>
            <person name="Taghavi S."/>
            <person name="McCorkle S."/>
            <person name="Dunn J."/>
            <person name="van der Lelie D."/>
            <person name="Mergeay M."/>
        </authorList>
    </citation>
    <scope>NUCLEOTIDE SEQUENCE [LARGE SCALE GENOMIC DNA]</scope>
    <source>
        <strain>ATCC 43123 / DSM 2839 / NBRC 102507 / CH34</strain>
    </source>
</reference>
<evidence type="ECO:0000255" key="1">
    <source>
        <dbReference type="HAMAP-Rule" id="MF_00524"/>
    </source>
</evidence>
<keyword id="KW-0067">ATP-binding</keyword>
<keyword id="KW-0963">Cytoplasm</keyword>
<keyword id="KW-0324">Glycolysis</keyword>
<keyword id="KW-0418">Kinase</keyword>
<keyword id="KW-0547">Nucleotide-binding</keyword>
<keyword id="KW-0614">Plasmid</keyword>
<keyword id="KW-1185">Reference proteome</keyword>
<keyword id="KW-0808">Transferase</keyword>
<geneLocation type="plasmid">
    <name>megaplasmid CH34</name>
</geneLocation>
<accession>Q1LB18</accession>
<proteinExistence type="inferred from homology"/>
<comment type="catalytic activity">
    <reaction evidence="1">
        <text>D-glucose + ATP = D-glucose 6-phosphate + ADP + H(+)</text>
        <dbReference type="Rhea" id="RHEA:17825"/>
        <dbReference type="ChEBI" id="CHEBI:4167"/>
        <dbReference type="ChEBI" id="CHEBI:15378"/>
        <dbReference type="ChEBI" id="CHEBI:30616"/>
        <dbReference type="ChEBI" id="CHEBI:61548"/>
        <dbReference type="ChEBI" id="CHEBI:456216"/>
        <dbReference type="EC" id="2.7.1.2"/>
    </reaction>
</comment>
<comment type="subcellular location">
    <subcellularLocation>
        <location evidence="1">Cytoplasm</location>
    </subcellularLocation>
</comment>
<comment type="similarity">
    <text evidence="1">Belongs to the bacterial glucokinase family.</text>
</comment>
<gene>
    <name evidence="1" type="primary">glk</name>
    <name type="ordered locus">Rmet_5799</name>
</gene>
<protein>
    <recommendedName>
        <fullName evidence="1">Glucokinase</fullName>
        <ecNumber evidence="1">2.7.1.2</ecNumber>
    </recommendedName>
    <alternativeName>
        <fullName evidence="1">Glucose kinase</fullName>
    </alternativeName>
</protein>
<name>GLK_CUPMC</name>
<feature type="chain" id="PRO_0000268781" description="Glucokinase">
    <location>
        <begin position="1"/>
        <end position="336"/>
    </location>
</feature>
<feature type="binding site" evidence="1">
    <location>
        <begin position="13"/>
        <end position="18"/>
    </location>
    <ligand>
        <name>ATP</name>
        <dbReference type="ChEBI" id="CHEBI:30616"/>
    </ligand>
</feature>
<organism>
    <name type="scientific">Cupriavidus metallidurans (strain ATCC 43123 / DSM 2839 / NBRC 102507 / CH34)</name>
    <name type="common">Ralstonia metallidurans</name>
    <dbReference type="NCBI Taxonomy" id="266264"/>
    <lineage>
        <taxon>Bacteria</taxon>
        <taxon>Pseudomonadati</taxon>
        <taxon>Pseudomonadota</taxon>
        <taxon>Betaproteobacteria</taxon>
        <taxon>Burkholderiales</taxon>
        <taxon>Burkholderiaceae</taxon>
        <taxon>Cupriavidus</taxon>
    </lineage>
</organism>
<dbReference type="EC" id="2.7.1.2" evidence="1"/>
<dbReference type="EMBL" id="CP000353">
    <property type="protein sequence ID" value="ABF12658.1"/>
    <property type="molecule type" value="Genomic_DNA"/>
</dbReference>
<dbReference type="RefSeq" id="WP_011520194.1">
    <property type="nucleotide sequence ID" value="NC_007974.2"/>
</dbReference>
<dbReference type="SMR" id="Q1LB18"/>
<dbReference type="KEGG" id="rme:Rmet_5799"/>
<dbReference type="eggNOG" id="COG0837">
    <property type="taxonomic scope" value="Bacteria"/>
</dbReference>
<dbReference type="HOGENOM" id="CLU_042582_1_0_4"/>
<dbReference type="Proteomes" id="UP000002429">
    <property type="component" value="Plasmid megaplasmid CH34"/>
</dbReference>
<dbReference type="GO" id="GO:0005829">
    <property type="term" value="C:cytosol"/>
    <property type="evidence" value="ECO:0007669"/>
    <property type="project" value="TreeGrafter"/>
</dbReference>
<dbReference type="GO" id="GO:0005524">
    <property type="term" value="F:ATP binding"/>
    <property type="evidence" value="ECO:0007669"/>
    <property type="project" value="UniProtKB-UniRule"/>
</dbReference>
<dbReference type="GO" id="GO:0005536">
    <property type="term" value="F:D-glucose binding"/>
    <property type="evidence" value="ECO:0007669"/>
    <property type="project" value="InterPro"/>
</dbReference>
<dbReference type="GO" id="GO:0004340">
    <property type="term" value="F:glucokinase activity"/>
    <property type="evidence" value="ECO:0007669"/>
    <property type="project" value="UniProtKB-UniRule"/>
</dbReference>
<dbReference type="GO" id="GO:0006096">
    <property type="term" value="P:glycolytic process"/>
    <property type="evidence" value="ECO:0007669"/>
    <property type="project" value="UniProtKB-UniRule"/>
</dbReference>
<dbReference type="CDD" id="cd24008">
    <property type="entry name" value="ASKHA_NBD_GLK"/>
    <property type="match status" value="1"/>
</dbReference>
<dbReference type="Gene3D" id="3.30.420.40">
    <property type="match status" value="1"/>
</dbReference>
<dbReference type="Gene3D" id="3.40.367.20">
    <property type="match status" value="1"/>
</dbReference>
<dbReference type="HAMAP" id="MF_00524">
    <property type="entry name" value="Glucokinase"/>
    <property type="match status" value="1"/>
</dbReference>
<dbReference type="InterPro" id="IPR043129">
    <property type="entry name" value="ATPase_NBD"/>
</dbReference>
<dbReference type="InterPro" id="IPR050201">
    <property type="entry name" value="Bacterial_glucokinase"/>
</dbReference>
<dbReference type="InterPro" id="IPR003836">
    <property type="entry name" value="Glucokinase"/>
</dbReference>
<dbReference type="NCBIfam" id="TIGR00749">
    <property type="entry name" value="glk"/>
    <property type="match status" value="1"/>
</dbReference>
<dbReference type="NCBIfam" id="NF001416">
    <property type="entry name" value="PRK00292.1-3"/>
    <property type="match status" value="1"/>
</dbReference>
<dbReference type="PANTHER" id="PTHR47690">
    <property type="entry name" value="GLUCOKINASE"/>
    <property type="match status" value="1"/>
</dbReference>
<dbReference type="PANTHER" id="PTHR47690:SF1">
    <property type="entry name" value="GLUCOKINASE"/>
    <property type="match status" value="1"/>
</dbReference>
<dbReference type="Pfam" id="PF02685">
    <property type="entry name" value="Glucokinase"/>
    <property type="match status" value="1"/>
</dbReference>
<dbReference type="SUPFAM" id="SSF53067">
    <property type="entry name" value="Actin-like ATPase domain"/>
    <property type="match status" value="1"/>
</dbReference>